<organism>
    <name type="scientific">Lactococcus lactis subsp. cremoris (strain SK11)</name>
    <dbReference type="NCBI Taxonomy" id="272622"/>
    <lineage>
        <taxon>Bacteria</taxon>
        <taxon>Bacillati</taxon>
        <taxon>Bacillota</taxon>
        <taxon>Bacilli</taxon>
        <taxon>Lactobacillales</taxon>
        <taxon>Streptococcaceae</taxon>
        <taxon>Lactococcus</taxon>
        <taxon>Lactococcus cremoris subsp. cremoris</taxon>
    </lineage>
</organism>
<name>RS2_LACLS</name>
<protein>
    <recommendedName>
        <fullName evidence="1">Small ribosomal subunit protein uS2</fullName>
    </recommendedName>
    <alternativeName>
        <fullName evidence="3">30S ribosomal protein S2</fullName>
    </alternativeName>
</protein>
<gene>
    <name evidence="1" type="primary">rpsB</name>
    <name type="ordered locus">LACR_2455</name>
</gene>
<proteinExistence type="inferred from homology"/>
<sequence>MSVISMKQLLEAGVHFGHQTRRWNPKMKPYIFTERNGIHVIDLQKTEKLVDDAYNYVKNASQEGAVVLFVGTKKQAAEAVKEEALRAGQYYVNHRWLGGMLTNWNTIQTRVTRLKEINKMEEEGTFEVLPKKEVVLLNKERERLEKFIGGIADMPRIPDVMYIVDPHAEQIAVKEAKTLGIPVVAMVDTNADPEPIDVVIPANDDAIRAVKLITAKMADAIIEGRQGEDAAEDFVAEEAASEESLEELAEIVEGK</sequence>
<evidence type="ECO:0000255" key="1">
    <source>
        <dbReference type="HAMAP-Rule" id="MF_00291"/>
    </source>
</evidence>
<evidence type="ECO:0000256" key="2">
    <source>
        <dbReference type="SAM" id="MobiDB-lite"/>
    </source>
</evidence>
<evidence type="ECO:0000305" key="3"/>
<dbReference type="EMBL" id="CP000425">
    <property type="protein sequence ID" value="ABJ73894.1"/>
    <property type="molecule type" value="Genomic_DNA"/>
</dbReference>
<dbReference type="RefSeq" id="WP_011677207.1">
    <property type="nucleotide sequence ID" value="NC_008527.1"/>
</dbReference>
<dbReference type="SMR" id="Q02VX8"/>
<dbReference type="KEGG" id="llc:LACR_2455"/>
<dbReference type="HOGENOM" id="CLU_040318_1_2_9"/>
<dbReference type="Proteomes" id="UP000000240">
    <property type="component" value="Chromosome"/>
</dbReference>
<dbReference type="GO" id="GO:0022627">
    <property type="term" value="C:cytosolic small ribosomal subunit"/>
    <property type="evidence" value="ECO:0007669"/>
    <property type="project" value="TreeGrafter"/>
</dbReference>
<dbReference type="GO" id="GO:0003735">
    <property type="term" value="F:structural constituent of ribosome"/>
    <property type="evidence" value="ECO:0007669"/>
    <property type="project" value="InterPro"/>
</dbReference>
<dbReference type="GO" id="GO:0006412">
    <property type="term" value="P:translation"/>
    <property type="evidence" value="ECO:0007669"/>
    <property type="project" value="UniProtKB-UniRule"/>
</dbReference>
<dbReference type="CDD" id="cd01425">
    <property type="entry name" value="RPS2"/>
    <property type="match status" value="1"/>
</dbReference>
<dbReference type="FunFam" id="1.10.287.610:FF:000001">
    <property type="entry name" value="30S ribosomal protein S2"/>
    <property type="match status" value="1"/>
</dbReference>
<dbReference type="Gene3D" id="3.40.50.10490">
    <property type="entry name" value="Glucose-6-phosphate isomerase like protein, domain 1"/>
    <property type="match status" value="1"/>
</dbReference>
<dbReference type="Gene3D" id="1.10.287.610">
    <property type="entry name" value="Helix hairpin bin"/>
    <property type="match status" value="1"/>
</dbReference>
<dbReference type="HAMAP" id="MF_00291_B">
    <property type="entry name" value="Ribosomal_uS2_B"/>
    <property type="match status" value="1"/>
</dbReference>
<dbReference type="InterPro" id="IPR001865">
    <property type="entry name" value="Ribosomal_uS2"/>
</dbReference>
<dbReference type="InterPro" id="IPR005706">
    <property type="entry name" value="Ribosomal_uS2_bac/mit/plastid"/>
</dbReference>
<dbReference type="InterPro" id="IPR018130">
    <property type="entry name" value="Ribosomal_uS2_CS"/>
</dbReference>
<dbReference type="InterPro" id="IPR023591">
    <property type="entry name" value="Ribosomal_uS2_flav_dom_sf"/>
</dbReference>
<dbReference type="NCBIfam" id="TIGR01011">
    <property type="entry name" value="rpsB_bact"/>
    <property type="match status" value="1"/>
</dbReference>
<dbReference type="PANTHER" id="PTHR12534">
    <property type="entry name" value="30S RIBOSOMAL PROTEIN S2 PROKARYOTIC AND ORGANELLAR"/>
    <property type="match status" value="1"/>
</dbReference>
<dbReference type="PANTHER" id="PTHR12534:SF0">
    <property type="entry name" value="SMALL RIBOSOMAL SUBUNIT PROTEIN US2M"/>
    <property type="match status" value="1"/>
</dbReference>
<dbReference type="Pfam" id="PF00318">
    <property type="entry name" value="Ribosomal_S2"/>
    <property type="match status" value="1"/>
</dbReference>
<dbReference type="PRINTS" id="PR00395">
    <property type="entry name" value="RIBOSOMALS2"/>
</dbReference>
<dbReference type="SUPFAM" id="SSF52313">
    <property type="entry name" value="Ribosomal protein S2"/>
    <property type="match status" value="1"/>
</dbReference>
<dbReference type="PROSITE" id="PS00962">
    <property type="entry name" value="RIBOSOMAL_S2_1"/>
    <property type="match status" value="1"/>
</dbReference>
<feature type="chain" id="PRO_1000003986" description="Small ribosomal subunit protein uS2">
    <location>
        <begin position="1"/>
        <end position="255"/>
    </location>
</feature>
<feature type="region of interest" description="Disordered" evidence="2">
    <location>
        <begin position="233"/>
        <end position="255"/>
    </location>
</feature>
<keyword id="KW-0687">Ribonucleoprotein</keyword>
<keyword id="KW-0689">Ribosomal protein</keyword>
<reference key="1">
    <citation type="journal article" date="2006" name="Proc. Natl. Acad. Sci. U.S.A.">
        <title>Comparative genomics of the lactic acid bacteria.</title>
        <authorList>
            <person name="Makarova K.S."/>
            <person name="Slesarev A."/>
            <person name="Wolf Y.I."/>
            <person name="Sorokin A."/>
            <person name="Mirkin B."/>
            <person name="Koonin E.V."/>
            <person name="Pavlov A."/>
            <person name="Pavlova N."/>
            <person name="Karamychev V."/>
            <person name="Polouchine N."/>
            <person name="Shakhova V."/>
            <person name="Grigoriev I."/>
            <person name="Lou Y."/>
            <person name="Rohksar D."/>
            <person name="Lucas S."/>
            <person name="Huang K."/>
            <person name="Goodstein D.M."/>
            <person name="Hawkins T."/>
            <person name="Plengvidhya V."/>
            <person name="Welker D."/>
            <person name="Hughes J."/>
            <person name="Goh Y."/>
            <person name="Benson A."/>
            <person name="Baldwin K."/>
            <person name="Lee J.-H."/>
            <person name="Diaz-Muniz I."/>
            <person name="Dosti B."/>
            <person name="Smeianov V."/>
            <person name="Wechter W."/>
            <person name="Barabote R."/>
            <person name="Lorca G."/>
            <person name="Altermann E."/>
            <person name="Barrangou R."/>
            <person name="Ganesan B."/>
            <person name="Xie Y."/>
            <person name="Rawsthorne H."/>
            <person name="Tamir D."/>
            <person name="Parker C."/>
            <person name="Breidt F."/>
            <person name="Broadbent J.R."/>
            <person name="Hutkins R."/>
            <person name="O'Sullivan D."/>
            <person name="Steele J."/>
            <person name="Unlu G."/>
            <person name="Saier M.H. Jr."/>
            <person name="Klaenhammer T."/>
            <person name="Richardson P."/>
            <person name="Kozyavkin S."/>
            <person name="Weimer B.C."/>
            <person name="Mills D.A."/>
        </authorList>
    </citation>
    <scope>NUCLEOTIDE SEQUENCE [LARGE SCALE GENOMIC DNA]</scope>
    <source>
        <strain>SK11</strain>
    </source>
</reference>
<accession>Q02VX8</accession>
<comment type="similarity">
    <text evidence="1">Belongs to the universal ribosomal protein uS2 family.</text>
</comment>